<evidence type="ECO:0000255" key="1"/>
<evidence type="ECO:0000255" key="2">
    <source>
        <dbReference type="PROSITE-ProRule" id="PRU00082"/>
    </source>
</evidence>
<evidence type="ECO:0000269" key="3">
    <source>
    </source>
</evidence>
<evidence type="ECO:0000269" key="4">
    <source>
    </source>
</evidence>
<organism>
    <name type="scientific">Saccharomyces cerevisiae (strain ATCC 204508 / S288c)</name>
    <name type="common">Baker's yeast</name>
    <dbReference type="NCBI Taxonomy" id="559292"/>
    <lineage>
        <taxon>Eukaryota</taxon>
        <taxon>Fungi</taxon>
        <taxon>Dikarya</taxon>
        <taxon>Ascomycota</taxon>
        <taxon>Saccharomycotina</taxon>
        <taxon>Saccharomycetes</taxon>
        <taxon>Saccharomycetales</taxon>
        <taxon>Saccharomycetaceae</taxon>
        <taxon>Saccharomyces</taxon>
    </lineage>
</organism>
<sequence>MIFNLPVSVLLYFSLIWAMEPSFVRGKNVVNLITFKDSNGKLHKRLAPEEIPPRLHNSQVNSYPLGYKGMRDFSRPAVNLDDILGTQQRKQQEFLAELSPLSLESKLSLVNEVQIFASYVRNDVETYNKVSDPNEDLIIIAPTNRAVSQLTLKPWQFPNNIDKLESDGATEKELDTAIQENISKFVRSHIVVYNDDKNSYKKVSPGCTLLQSIDFTESKKSDSETGGDILLKKEGEVYYVASSRDEKFHAVESIENGSNGVILMVDFTLVGP</sequence>
<name>YFAS1_YEAST</name>
<comment type="subcellular location">
    <subcellularLocation>
        <location evidence="3">Vacuole</location>
    </subcellularLocation>
</comment>
<comment type="miscellaneous">
    <text evidence="4">Present with 4846 molecules/cell in log phase SD medium.</text>
</comment>
<gene>
    <name type="ordered locus">YDR262W</name>
    <name type="ORF">YD9320B.01</name>
</gene>
<feature type="signal peptide" evidence="1">
    <location>
        <begin position="1"/>
        <end position="26"/>
    </location>
</feature>
<feature type="chain" id="PRO_0000008801" description="FAS1 domain-containing protein YDR262W">
    <location>
        <begin position="27"/>
        <end position="272"/>
    </location>
</feature>
<feature type="domain" description="FAS1" evidence="2">
    <location>
        <begin position="100"/>
        <end position="269"/>
    </location>
</feature>
<keyword id="KW-0903">Direct protein sequencing</keyword>
<keyword id="KW-1185">Reference proteome</keyword>
<keyword id="KW-0732">Signal</keyword>
<keyword id="KW-0926">Vacuole</keyword>
<dbReference type="EMBL" id="Z68290">
    <property type="protein sequence ID" value="CAA92580.1"/>
    <property type="molecule type" value="Genomic_DNA"/>
</dbReference>
<dbReference type="EMBL" id="Z70202">
    <property type="protein sequence ID" value="CAA94101.1"/>
    <property type="molecule type" value="Genomic_DNA"/>
</dbReference>
<dbReference type="EMBL" id="Z74387">
    <property type="protein sequence ID" value="CAA98911.1"/>
    <property type="molecule type" value="Genomic_DNA"/>
</dbReference>
<dbReference type="EMBL" id="AY557738">
    <property type="protein sequence ID" value="AAS56064.1"/>
    <property type="molecule type" value="Genomic_DNA"/>
</dbReference>
<dbReference type="EMBL" id="BK006938">
    <property type="protein sequence ID" value="DAA12106.1"/>
    <property type="molecule type" value="Genomic_DNA"/>
</dbReference>
<dbReference type="PIR" id="S61117">
    <property type="entry name" value="S61117"/>
</dbReference>
<dbReference type="RefSeq" id="NP_010548.3">
    <property type="nucleotide sequence ID" value="NM_001180570.3"/>
</dbReference>
<dbReference type="BioGRID" id="32318">
    <property type="interactions" value="50"/>
</dbReference>
<dbReference type="DIP" id="DIP-8945N"/>
<dbReference type="FunCoup" id="Q12331">
    <property type="interactions" value="29"/>
</dbReference>
<dbReference type="IntAct" id="Q12331">
    <property type="interactions" value="1"/>
</dbReference>
<dbReference type="STRING" id="4932.YDR262W"/>
<dbReference type="PaxDb" id="4932-YDR262W"/>
<dbReference type="PeptideAtlas" id="Q12331"/>
<dbReference type="EnsemblFungi" id="YDR262W_mRNA">
    <property type="protein sequence ID" value="YDR262W"/>
    <property type="gene ID" value="YDR262W"/>
</dbReference>
<dbReference type="GeneID" id="851855"/>
<dbReference type="KEGG" id="sce:YDR262W"/>
<dbReference type="AGR" id="SGD:S000002670"/>
<dbReference type="SGD" id="S000002670">
    <property type="gene designation" value="YDR262W"/>
</dbReference>
<dbReference type="VEuPathDB" id="FungiDB:YDR262W"/>
<dbReference type="eggNOG" id="ENOG502S17N">
    <property type="taxonomic scope" value="Eukaryota"/>
</dbReference>
<dbReference type="HOGENOM" id="CLU_076942_0_0_1"/>
<dbReference type="InParanoid" id="Q12331"/>
<dbReference type="OMA" id="IDSCLEW"/>
<dbReference type="OrthoDB" id="5551751at2759"/>
<dbReference type="BioCyc" id="YEAST:G3O-29832-MONOMER"/>
<dbReference type="BioGRID-ORCS" id="851855">
    <property type="hits" value="0 hits in 10 CRISPR screens"/>
</dbReference>
<dbReference type="PRO" id="PR:Q12331"/>
<dbReference type="Proteomes" id="UP000002311">
    <property type="component" value="Chromosome IV"/>
</dbReference>
<dbReference type="RNAct" id="Q12331">
    <property type="molecule type" value="protein"/>
</dbReference>
<dbReference type="GO" id="GO:0000324">
    <property type="term" value="C:fungal-type vacuole"/>
    <property type="evidence" value="ECO:0007005"/>
    <property type="project" value="SGD"/>
</dbReference>
<dbReference type="InterPro" id="IPR000782">
    <property type="entry name" value="FAS1_domain"/>
</dbReference>
<dbReference type="InterPro" id="IPR040200">
    <property type="entry name" value="Mug57-like"/>
</dbReference>
<dbReference type="PANTHER" id="PTHR28156">
    <property type="entry name" value="FAS1 DOMAIN-CONTAINING PROTEIN YDR262W"/>
    <property type="match status" value="1"/>
</dbReference>
<dbReference type="PANTHER" id="PTHR28156:SF1">
    <property type="entry name" value="FAS1 DOMAIN-CONTAINING PROTEIN YDR262W"/>
    <property type="match status" value="1"/>
</dbReference>
<dbReference type="PROSITE" id="PS50213">
    <property type="entry name" value="FAS1"/>
    <property type="match status" value="1"/>
</dbReference>
<accession>Q12331</accession>
<accession>D6VSP6</accession>
<protein>
    <recommendedName>
        <fullName>FAS1 domain-containing protein YDR262W</fullName>
    </recommendedName>
</protein>
<proteinExistence type="evidence at protein level"/>
<reference key="1">
    <citation type="journal article" date="1997" name="Nature">
        <title>The nucleotide sequence of Saccharomyces cerevisiae chromosome IV.</title>
        <authorList>
            <person name="Jacq C."/>
            <person name="Alt-Moerbe J."/>
            <person name="Andre B."/>
            <person name="Arnold W."/>
            <person name="Bahr A."/>
            <person name="Ballesta J.P.G."/>
            <person name="Bargues M."/>
            <person name="Baron L."/>
            <person name="Becker A."/>
            <person name="Biteau N."/>
            <person name="Bloecker H."/>
            <person name="Blugeon C."/>
            <person name="Boskovic J."/>
            <person name="Brandt P."/>
            <person name="Brueckner M."/>
            <person name="Buitrago M.J."/>
            <person name="Coster F."/>
            <person name="Delaveau T."/>
            <person name="del Rey F."/>
            <person name="Dujon B."/>
            <person name="Eide L.G."/>
            <person name="Garcia-Cantalejo J.M."/>
            <person name="Goffeau A."/>
            <person name="Gomez-Peris A."/>
            <person name="Granotier C."/>
            <person name="Hanemann V."/>
            <person name="Hankeln T."/>
            <person name="Hoheisel J.D."/>
            <person name="Jaeger W."/>
            <person name="Jimenez A."/>
            <person name="Jonniaux J.-L."/>
            <person name="Kraemer C."/>
            <person name="Kuester H."/>
            <person name="Laamanen P."/>
            <person name="Legros Y."/>
            <person name="Louis E.J."/>
            <person name="Moeller-Rieker S."/>
            <person name="Monnet A."/>
            <person name="Moro M."/>
            <person name="Mueller-Auer S."/>
            <person name="Nussbaumer B."/>
            <person name="Paricio N."/>
            <person name="Paulin L."/>
            <person name="Perea J."/>
            <person name="Perez-Alonso M."/>
            <person name="Perez-Ortin J.E."/>
            <person name="Pohl T.M."/>
            <person name="Prydz H."/>
            <person name="Purnelle B."/>
            <person name="Rasmussen S.W."/>
            <person name="Remacha M.A."/>
            <person name="Revuelta J.L."/>
            <person name="Rieger M."/>
            <person name="Salom D."/>
            <person name="Saluz H.P."/>
            <person name="Saiz J.E."/>
            <person name="Saren A.-M."/>
            <person name="Schaefer M."/>
            <person name="Scharfe M."/>
            <person name="Schmidt E.R."/>
            <person name="Schneider C."/>
            <person name="Scholler P."/>
            <person name="Schwarz S."/>
            <person name="Soler-Mira A."/>
            <person name="Urrestarazu L.A."/>
            <person name="Verhasselt P."/>
            <person name="Vissers S."/>
            <person name="Voet M."/>
            <person name="Volckaert G."/>
            <person name="Wagner G."/>
            <person name="Wambutt R."/>
            <person name="Wedler E."/>
            <person name="Wedler H."/>
            <person name="Woelfl S."/>
            <person name="Harris D.E."/>
            <person name="Bowman S."/>
            <person name="Brown D."/>
            <person name="Churcher C.M."/>
            <person name="Connor R."/>
            <person name="Dedman K."/>
            <person name="Gentles S."/>
            <person name="Hamlin N."/>
            <person name="Hunt S."/>
            <person name="Jones L."/>
            <person name="McDonald S."/>
            <person name="Murphy L.D."/>
            <person name="Niblett D."/>
            <person name="Odell C."/>
            <person name="Oliver K."/>
            <person name="Rajandream M.A."/>
            <person name="Richards C."/>
            <person name="Shore L."/>
            <person name="Walsh S.V."/>
            <person name="Barrell B.G."/>
            <person name="Dietrich F.S."/>
            <person name="Mulligan J.T."/>
            <person name="Allen E."/>
            <person name="Araujo R."/>
            <person name="Aviles E."/>
            <person name="Berno A."/>
            <person name="Carpenter J."/>
            <person name="Chen E."/>
            <person name="Cherry J.M."/>
            <person name="Chung E."/>
            <person name="Duncan M."/>
            <person name="Hunicke-Smith S."/>
            <person name="Hyman R.W."/>
            <person name="Komp C."/>
            <person name="Lashkari D."/>
            <person name="Lew H."/>
            <person name="Lin D."/>
            <person name="Mosedale D."/>
            <person name="Nakahara K."/>
            <person name="Namath A."/>
            <person name="Oefner P."/>
            <person name="Oh C."/>
            <person name="Petel F.X."/>
            <person name="Roberts D."/>
            <person name="Schramm S."/>
            <person name="Schroeder M."/>
            <person name="Shogren T."/>
            <person name="Shroff N."/>
            <person name="Winant A."/>
            <person name="Yelton M.A."/>
            <person name="Botstein D."/>
            <person name="Davis R.W."/>
            <person name="Johnston M."/>
            <person name="Andrews S."/>
            <person name="Brinkman R."/>
            <person name="Cooper J."/>
            <person name="Ding H."/>
            <person name="Du Z."/>
            <person name="Favello A."/>
            <person name="Fulton L."/>
            <person name="Gattung S."/>
            <person name="Greco T."/>
            <person name="Hallsworth K."/>
            <person name="Hawkins J."/>
            <person name="Hillier L.W."/>
            <person name="Jier M."/>
            <person name="Johnson D."/>
            <person name="Johnston L."/>
            <person name="Kirsten J."/>
            <person name="Kucaba T."/>
            <person name="Langston Y."/>
            <person name="Latreille P."/>
            <person name="Le T."/>
            <person name="Mardis E."/>
            <person name="Menezes S."/>
            <person name="Miller N."/>
            <person name="Nhan M."/>
            <person name="Pauley A."/>
            <person name="Peluso D."/>
            <person name="Rifkin L."/>
            <person name="Riles L."/>
            <person name="Taich A."/>
            <person name="Trevaskis E."/>
            <person name="Vignati D."/>
            <person name="Wilcox L."/>
            <person name="Wohldman P."/>
            <person name="Vaudin M."/>
            <person name="Wilson R."/>
            <person name="Waterston R."/>
            <person name="Albermann K."/>
            <person name="Hani J."/>
            <person name="Heumann K."/>
            <person name="Kleine K."/>
            <person name="Mewes H.-W."/>
            <person name="Zollner A."/>
            <person name="Zaccaria P."/>
        </authorList>
    </citation>
    <scope>NUCLEOTIDE SEQUENCE [LARGE SCALE GENOMIC DNA]</scope>
    <source>
        <strain>ATCC 204508 / S288c</strain>
    </source>
</reference>
<reference key="2">
    <citation type="journal article" date="2014" name="G3 (Bethesda)">
        <title>The reference genome sequence of Saccharomyces cerevisiae: Then and now.</title>
        <authorList>
            <person name="Engel S.R."/>
            <person name="Dietrich F.S."/>
            <person name="Fisk D.G."/>
            <person name="Binkley G."/>
            <person name="Balakrishnan R."/>
            <person name="Costanzo M.C."/>
            <person name="Dwight S.S."/>
            <person name="Hitz B.C."/>
            <person name="Karra K."/>
            <person name="Nash R.S."/>
            <person name="Weng S."/>
            <person name="Wong E.D."/>
            <person name="Lloyd P."/>
            <person name="Skrzypek M.S."/>
            <person name="Miyasato S.R."/>
            <person name="Simison M."/>
            <person name="Cherry J.M."/>
        </authorList>
    </citation>
    <scope>GENOME REANNOTATION</scope>
    <source>
        <strain>ATCC 204508 / S288c</strain>
    </source>
</reference>
<reference key="3">
    <citation type="journal article" date="2007" name="Genome Res.">
        <title>Approaching a complete repository of sequence-verified protein-encoding clones for Saccharomyces cerevisiae.</title>
        <authorList>
            <person name="Hu Y."/>
            <person name="Rolfs A."/>
            <person name="Bhullar B."/>
            <person name="Murthy T.V.S."/>
            <person name="Zhu C."/>
            <person name="Berger M.F."/>
            <person name="Camargo A.A."/>
            <person name="Kelley F."/>
            <person name="McCarron S."/>
            <person name="Jepson D."/>
            <person name="Richardson A."/>
            <person name="Raphael J."/>
            <person name="Moreira D."/>
            <person name="Taycher E."/>
            <person name="Zuo D."/>
            <person name="Mohr S."/>
            <person name="Kane M.F."/>
            <person name="Williamson J."/>
            <person name="Simpson A.J.G."/>
            <person name="Bulyk M.L."/>
            <person name="Harlow E."/>
            <person name="Marsischky G."/>
            <person name="Kolodner R.D."/>
            <person name="LaBaer J."/>
        </authorList>
    </citation>
    <scope>NUCLEOTIDE SEQUENCE [GENOMIC DNA]</scope>
    <source>
        <strain>ATCC 204508 / S288c</strain>
    </source>
</reference>
<reference key="4">
    <citation type="submission" date="2005-05" db="UniProtKB">
        <authorList>
            <person name="Bienvenut W.V."/>
            <person name="Peters C."/>
        </authorList>
    </citation>
    <scope>PROTEIN SEQUENCE OF 72-89 AND 234-244</scope>
    <scope>IDENTIFICATION BY MASS SPECTROMETRY</scope>
</reference>
<reference key="5">
    <citation type="journal article" date="2003" name="Nature">
        <title>Global analysis of protein localization in budding yeast.</title>
        <authorList>
            <person name="Huh W.-K."/>
            <person name="Falvo J.V."/>
            <person name="Gerke L.C."/>
            <person name="Carroll A.S."/>
            <person name="Howson R.W."/>
            <person name="Weissman J.S."/>
            <person name="O'Shea E.K."/>
        </authorList>
    </citation>
    <scope>SUBCELLULAR LOCATION [LARGE SCALE ANALYSIS]</scope>
</reference>
<reference key="6">
    <citation type="journal article" date="2003" name="Nature">
        <title>Global analysis of protein expression in yeast.</title>
        <authorList>
            <person name="Ghaemmaghami S."/>
            <person name="Huh W.-K."/>
            <person name="Bower K."/>
            <person name="Howson R.W."/>
            <person name="Belle A."/>
            <person name="Dephoure N."/>
            <person name="O'Shea E.K."/>
            <person name="Weissman J.S."/>
        </authorList>
    </citation>
    <scope>LEVEL OF PROTEIN EXPRESSION [LARGE SCALE ANALYSIS]</scope>
</reference>